<gene>
    <name evidence="1" type="primary">leuC</name>
    <name type="ordered locus">VCM66_2414</name>
</gene>
<accession>C3LR34</accession>
<reference key="1">
    <citation type="journal article" date="2008" name="PLoS ONE">
        <title>A recalibrated molecular clock and independent origins for the cholera pandemic clones.</title>
        <authorList>
            <person name="Feng L."/>
            <person name="Reeves P.R."/>
            <person name="Lan R."/>
            <person name="Ren Y."/>
            <person name="Gao C."/>
            <person name="Zhou Z."/>
            <person name="Ren Y."/>
            <person name="Cheng J."/>
            <person name="Wang W."/>
            <person name="Wang J."/>
            <person name="Qian W."/>
            <person name="Li D."/>
            <person name="Wang L."/>
        </authorList>
    </citation>
    <scope>NUCLEOTIDE SEQUENCE [LARGE SCALE GENOMIC DNA]</scope>
    <source>
        <strain>M66-2</strain>
    </source>
</reference>
<evidence type="ECO:0000255" key="1">
    <source>
        <dbReference type="HAMAP-Rule" id="MF_01026"/>
    </source>
</evidence>
<sequence>MSKAKTLYEKIYDAHVVVAAPGETPILYIDRHLVHEVTSPQAFDGLREKGRPVRQVSKTFATMDHNVSTTTKDINASGEMARIQMQTLSKNCEEFGVTLYDINHKYQGIVHVMGPELGITLPGMTIVCGDSHTATHGAFGSLAFGIGTSEVEHVLATQTLKQGRAKTMKIEVRGKVAPGITAKDIVLAIIGKTTAAGGTGYVVEFCGEAIRDLSMEGRMTVCNMAIELGAKAGLIAPDATTFNYIKGRKFAPQGSDWDAAVDYWQTLKTDEDAQFDAVVTLEASEIKPQVTWGTNPGQVIAVDEPIPSPSQFADPVERSSAEKALAYMGLEAGKMLSDYKVDKVFVGSCTNSRIEDMRAAAAVAKGKKVASHVQALIVPGSEQVKAQAEAEGLDKIFIEAGFEWRLPGCSMCLAMNNDRLGPGERCASTSNRNFEGRQGRDGRTHLVSPAMAAAAAIAGHFVDIRQF</sequence>
<feature type="chain" id="PRO_1000149376" description="3-isopropylmalate dehydratase large subunit">
    <location>
        <begin position="1"/>
        <end position="467"/>
    </location>
</feature>
<feature type="binding site" evidence="1">
    <location>
        <position position="349"/>
    </location>
    <ligand>
        <name>[4Fe-4S] cluster</name>
        <dbReference type="ChEBI" id="CHEBI:49883"/>
    </ligand>
</feature>
<feature type="binding site" evidence="1">
    <location>
        <position position="409"/>
    </location>
    <ligand>
        <name>[4Fe-4S] cluster</name>
        <dbReference type="ChEBI" id="CHEBI:49883"/>
    </ligand>
</feature>
<feature type="binding site" evidence="1">
    <location>
        <position position="412"/>
    </location>
    <ligand>
        <name>[4Fe-4S] cluster</name>
        <dbReference type="ChEBI" id="CHEBI:49883"/>
    </ligand>
</feature>
<proteinExistence type="inferred from homology"/>
<dbReference type="EC" id="4.2.1.33" evidence="1"/>
<dbReference type="EMBL" id="CP001233">
    <property type="protein sequence ID" value="ACP06712.1"/>
    <property type="molecule type" value="Genomic_DNA"/>
</dbReference>
<dbReference type="RefSeq" id="WP_000030317.1">
    <property type="nucleotide sequence ID" value="NC_012578.1"/>
</dbReference>
<dbReference type="SMR" id="C3LR34"/>
<dbReference type="KEGG" id="vcm:VCM66_2414"/>
<dbReference type="HOGENOM" id="CLU_006714_3_4_6"/>
<dbReference type="UniPathway" id="UPA00048">
    <property type="reaction ID" value="UER00071"/>
</dbReference>
<dbReference type="Proteomes" id="UP000001217">
    <property type="component" value="Chromosome I"/>
</dbReference>
<dbReference type="GO" id="GO:0003861">
    <property type="term" value="F:3-isopropylmalate dehydratase activity"/>
    <property type="evidence" value="ECO:0007669"/>
    <property type="project" value="UniProtKB-UniRule"/>
</dbReference>
<dbReference type="GO" id="GO:0051539">
    <property type="term" value="F:4 iron, 4 sulfur cluster binding"/>
    <property type="evidence" value="ECO:0007669"/>
    <property type="project" value="UniProtKB-KW"/>
</dbReference>
<dbReference type="GO" id="GO:0046872">
    <property type="term" value="F:metal ion binding"/>
    <property type="evidence" value="ECO:0007669"/>
    <property type="project" value="UniProtKB-KW"/>
</dbReference>
<dbReference type="GO" id="GO:0009098">
    <property type="term" value="P:L-leucine biosynthetic process"/>
    <property type="evidence" value="ECO:0007669"/>
    <property type="project" value="UniProtKB-UniRule"/>
</dbReference>
<dbReference type="CDD" id="cd01583">
    <property type="entry name" value="IPMI"/>
    <property type="match status" value="1"/>
</dbReference>
<dbReference type="FunFam" id="3.30.499.10:FF:000006">
    <property type="entry name" value="3-isopropylmalate dehydratase large subunit"/>
    <property type="match status" value="1"/>
</dbReference>
<dbReference type="FunFam" id="3.30.499.10:FF:000007">
    <property type="entry name" value="3-isopropylmalate dehydratase large subunit"/>
    <property type="match status" value="1"/>
</dbReference>
<dbReference type="Gene3D" id="3.30.499.10">
    <property type="entry name" value="Aconitase, domain 3"/>
    <property type="match status" value="2"/>
</dbReference>
<dbReference type="HAMAP" id="MF_01026">
    <property type="entry name" value="LeuC_type1"/>
    <property type="match status" value="1"/>
</dbReference>
<dbReference type="InterPro" id="IPR004430">
    <property type="entry name" value="3-IsopropMal_deHydase_lsu"/>
</dbReference>
<dbReference type="InterPro" id="IPR015931">
    <property type="entry name" value="Acnase/IPM_dHydase_lsu_aba_1/3"/>
</dbReference>
<dbReference type="InterPro" id="IPR001030">
    <property type="entry name" value="Acoase/IPM_deHydtase_lsu_aba"/>
</dbReference>
<dbReference type="InterPro" id="IPR018136">
    <property type="entry name" value="Aconitase_4Fe-4S_BS"/>
</dbReference>
<dbReference type="InterPro" id="IPR036008">
    <property type="entry name" value="Aconitase_4Fe-4S_dom"/>
</dbReference>
<dbReference type="InterPro" id="IPR050067">
    <property type="entry name" value="IPM_dehydratase_rel_enz"/>
</dbReference>
<dbReference type="InterPro" id="IPR033941">
    <property type="entry name" value="IPMI_cat"/>
</dbReference>
<dbReference type="NCBIfam" id="TIGR00170">
    <property type="entry name" value="leuC"/>
    <property type="match status" value="1"/>
</dbReference>
<dbReference type="NCBIfam" id="NF004016">
    <property type="entry name" value="PRK05478.1"/>
    <property type="match status" value="1"/>
</dbReference>
<dbReference type="NCBIfam" id="NF009116">
    <property type="entry name" value="PRK12466.1"/>
    <property type="match status" value="1"/>
</dbReference>
<dbReference type="PANTHER" id="PTHR43822:SF9">
    <property type="entry name" value="3-ISOPROPYLMALATE DEHYDRATASE"/>
    <property type="match status" value="1"/>
</dbReference>
<dbReference type="PANTHER" id="PTHR43822">
    <property type="entry name" value="HOMOACONITASE, MITOCHONDRIAL-RELATED"/>
    <property type="match status" value="1"/>
</dbReference>
<dbReference type="Pfam" id="PF00330">
    <property type="entry name" value="Aconitase"/>
    <property type="match status" value="1"/>
</dbReference>
<dbReference type="PRINTS" id="PR00415">
    <property type="entry name" value="ACONITASE"/>
</dbReference>
<dbReference type="SUPFAM" id="SSF53732">
    <property type="entry name" value="Aconitase iron-sulfur domain"/>
    <property type="match status" value="1"/>
</dbReference>
<dbReference type="PROSITE" id="PS00450">
    <property type="entry name" value="ACONITASE_1"/>
    <property type="match status" value="1"/>
</dbReference>
<dbReference type="PROSITE" id="PS01244">
    <property type="entry name" value="ACONITASE_2"/>
    <property type="match status" value="1"/>
</dbReference>
<name>LEUC_VIBCM</name>
<keyword id="KW-0004">4Fe-4S</keyword>
<keyword id="KW-0028">Amino-acid biosynthesis</keyword>
<keyword id="KW-0100">Branched-chain amino acid biosynthesis</keyword>
<keyword id="KW-0408">Iron</keyword>
<keyword id="KW-0411">Iron-sulfur</keyword>
<keyword id="KW-0432">Leucine biosynthesis</keyword>
<keyword id="KW-0456">Lyase</keyword>
<keyword id="KW-0479">Metal-binding</keyword>
<organism>
    <name type="scientific">Vibrio cholerae serotype O1 (strain M66-2)</name>
    <dbReference type="NCBI Taxonomy" id="579112"/>
    <lineage>
        <taxon>Bacteria</taxon>
        <taxon>Pseudomonadati</taxon>
        <taxon>Pseudomonadota</taxon>
        <taxon>Gammaproteobacteria</taxon>
        <taxon>Vibrionales</taxon>
        <taxon>Vibrionaceae</taxon>
        <taxon>Vibrio</taxon>
    </lineage>
</organism>
<comment type="function">
    <text evidence="1">Catalyzes the isomerization between 2-isopropylmalate and 3-isopropylmalate, via the formation of 2-isopropylmaleate.</text>
</comment>
<comment type="catalytic activity">
    <reaction evidence="1">
        <text>(2R,3S)-3-isopropylmalate = (2S)-2-isopropylmalate</text>
        <dbReference type="Rhea" id="RHEA:32287"/>
        <dbReference type="ChEBI" id="CHEBI:1178"/>
        <dbReference type="ChEBI" id="CHEBI:35121"/>
        <dbReference type="EC" id="4.2.1.33"/>
    </reaction>
</comment>
<comment type="cofactor">
    <cofactor evidence="1">
        <name>[4Fe-4S] cluster</name>
        <dbReference type="ChEBI" id="CHEBI:49883"/>
    </cofactor>
    <text evidence="1">Binds 1 [4Fe-4S] cluster per subunit.</text>
</comment>
<comment type="pathway">
    <text evidence="1">Amino-acid biosynthesis; L-leucine biosynthesis; L-leucine from 3-methyl-2-oxobutanoate: step 2/4.</text>
</comment>
<comment type="subunit">
    <text evidence="1">Heterodimer of LeuC and LeuD.</text>
</comment>
<comment type="similarity">
    <text evidence="1">Belongs to the aconitase/IPM isomerase family. LeuC type 1 subfamily.</text>
</comment>
<protein>
    <recommendedName>
        <fullName evidence="1">3-isopropylmalate dehydratase large subunit</fullName>
        <ecNumber evidence="1">4.2.1.33</ecNumber>
    </recommendedName>
    <alternativeName>
        <fullName evidence="1">Alpha-IPM isomerase</fullName>
        <shortName evidence="1">IPMI</shortName>
    </alternativeName>
    <alternativeName>
        <fullName evidence="1">Isopropylmalate isomerase</fullName>
    </alternativeName>
</protein>